<keyword id="KW-0378">Hydrolase</keyword>
<keyword id="KW-0460">Magnesium</keyword>
<keyword id="KW-0464">Manganese</keyword>
<keyword id="KW-0479">Metal-binding</keyword>
<keyword id="KW-0546">Nucleotide metabolism</keyword>
<keyword id="KW-0547">Nucleotide-binding</keyword>
<accession>B1IS25</accession>
<name>NCPP_ECOLC</name>
<evidence type="ECO:0000255" key="1">
    <source>
        <dbReference type="HAMAP-Rule" id="MF_00648"/>
    </source>
</evidence>
<reference key="1">
    <citation type="submission" date="2008-02" db="EMBL/GenBank/DDBJ databases">
        <title>Complete sequence of Escherichia coli C str. ATCC 8739.</title>
        <authorList>
            <person name="Copeland A."/>
            <person name="Lucas S."/>
            <person name="Lapidus A."/>
            <person name="Glavina del Rio T."/>
            <person name="Dalin E."/>
            <person name="Tice H."/>
            <person name="Bruce D."/>
            <person name="Goodwin L."/>
            <person name="Pitluck S."/>
            <person name="Kiss H."/>
            <person name="Brettin T."/>
            <person name="Detter J.C."/>
            <person name="Han C."/>
            <person name="Kuske C.R."/>
            <person name="Schmutz J."/>
            <person name="Larimer F."/>
            <person name="Land M."/>
            <person name="Hauser L."/>
            <person name="Kyrpides N."/>
            <person name="Mikhailova N."/>
            <person name="Ingram L."/>
            <person name="Richardson P."/>
        </authorList>
    </citation>
    <scope>NUCLEOTIDE SEQUENCE [LARGE SCALE GENOMIC DNA]</scope>
    <source>
        <strain>ATCC 8739 / DSM 1576 / NBRC 3972 / NCIMB 8545 / WDCM 00012 / Crooks</strain>
    </source>
</reference>
<feature type="chain" id="PRO_1000082717" description="Inosine/xanthosine triphosphatase">
    <location>
        <begin position="1"/>
        <end position="173"/>
    </location>
</feature>
<feature type="binding site" evidence="1">
    <location>
        <begin position="8"/>
        <end position="13"/>
    </location>
    <ligand>
        <name>substrate</name>
    </ligand>
</feature>
<feature type="binding site" evidence="1">
    <location>
        <position position="38"/>
    </location>
    <ligand>
        <name>Mg(2+)</name>
        <dbReference type="ChEBI" id="CHEBI:18420"/>
    </ligand>
</feature>
<feature type="binding site" evidence="1">
    <location>
        <begin position="68"/>
        <end position="69"/>
    </location>
    <ligand>
        <name>substrate</name>
    </ligand>
</feature>
<feature type="binding site" evidence="1">
    <location>
        <position position="68"/>
    </location>
    <ligand>
        <name>Mg(2+)</name>
        <dbReference type="ChEBI" id="CHEBI:18420"/>
    </ligand>
</feature>
<proteinExistence type="inferred from homology"/>
<protein>
    <recommendedName>
        <fullName evidence="1">Inosine/xanthosine triphosphatase</fullName>
        <shortName evidence="1">ITPase/XTPase</shortName>
        <ecNumber evidence="1">3.6.1.73</ecNumber>
    </recommendedName>
    <alternativeName>
        <fullName evidence="1">Non-canonical purine NTP phosphatase</fullName>
    </alternativeName>
    <alternativeName>
        <fullName evidence="1">Non-standard purine NTP phosphatase</fullName>
    </alternativeName>
    <alternativeName>
        <fullName evidence="1">Nucleoside-triphosphate phosphatase</fullName>
        <shortName evidence="1">NTPase</shortName>
    </alternativeName>
</protein>
<dbReference type="EC" id="3.6.1.73" evidence="1"/>
<dbReference type="EMBL" id="CP000946">
    <property type="protein sequence ID" value="ACA79273.1"/>
    <property type="molecule type" value="Genomic_DNA"/>
</dbReference>
<dbReference type="RefSeq" id="WP_001341279.1">
    <property type="nucleotide sequence ID" value="NZ_MTFT01000024.1"/>
</dbReference>
<dbReference type="SMR" id="B1IS25"/>
<dbReference type="KEGG" id="ecl:EcolC_3662"/>
<dbReference type="HOGENOM" id="CLU_087417_1_0_6"/>
<dbReference type="GO" id="GO:0103023">
    <property type="term" value="F:ITPase activity"/>
    <property type="evidence" value="ECO:0007669"/>
    <property type="project" value="UniProtKB-EC"/>
</dbReference>
<dbReference type="GO" id="GO:0046872">
    <property type="term" value="F:metal ion binding"/>
    <property type="evidence" value="ECO:0007669"/>
    <property type="project" value="UniProtKB-KW"/>
</dbReference>
<dbReference type="GO" id="GO:0000166">
    <property type="term" value="F:nucleotide binding"/>
    <property type="evidence" value="ECO:0007669"/>
    <property type="project" value="UniProtKB-KW"/>
</dbReference>
<dbReference type="GO" id="GO:0017111">
    <property type="term" value="F:ribonucleoside triphosphate phosphatase activity"/>
    <property type="evidence" value="ECO:0000250"/>
    <property type="project" value="UniProtKB"/>
</dbReference>
<dbReference type="GO" id="GO:0009117">
    <property type="term" value="P:nucleotide metabolic process"/>
    <property type="evidence" value="ECO:0007669"/>
    <property type="project" value="UniProtKB-KW"/>
</dbReference>
<dbReference type="GO" id="GO:0006772">
    <property type="term" value="P:thiamine metabolic process"/>
    <property type="evidence" value="ECO:0007669"/>
    <property type="project" value="TreeGrafter"/>
</dbReference>
<dbReference type="FunFam" id="3.90.950.10:FF:000002">
    <property type="entry name" value="Inosine/xanthosine triphosphatase"/>
    <property type="match status" value="1"/>
</dbReference>
<dbReference type="Gene3D" id="3.90.950.10">
    <property type="match status" value="1"/>
</dbReference>
<dbReference type="HAMAP" id="MF_00648">
    <property type="entry name" value="Non_canon_purine_NTPase_YjjX"/>
    <property type="match status" value="1"/>
</dbReference>
<dbReference type="InterPro" id="IPR029001">
    <property type="entry name" value="ITPase-like_fam"/>
</dbReference>
<dbReference type="InterPro" id="IPR002786">
    <property type="entry name" value="Non_canon_purine_NTPase"/>
</dbReference>
<dbReference type="InterPro" id="IPR026533">
    <property type="entry name" value="NTPase/PRRC1"/>
</dbReference>
<dbReference type="InterPro" id="IPR050299">
    <property type="entry name" value="YjjX_NTPase"/>
</dbReference>
<dbReference type="NCBIfam" id="TIGR00258">
    <property type="entry name" value="inosine/xanthosine triphosphatase"/>
    <property type="match status" value="1"/>
</dbReference>
<dbReference type="NCBIfam" id="NF003459">
    <property type="entry name" value="PRK05074.1"/>
    <property type="match status" value="1"/>
</dbReference>
<dbReference type="PANTHER" id="PTHR34699">
    <property type="match status" value="1"/>
</dbReference>
<dbReference type="PANTHER" id="PTHR34699:SF2">
    <property type="entry name" value="NON-CANONICAL PURINE NTP PHOSPHATASE_PRRC1 DOMAIN-CONTAINING PROTEIN"/>
    <property type="match status" value="1"/>
</dbReference>
<dbReference type="Pfam" id="PF01931">
    <property type="entry name" value="NTPase_I-T"/>
    <property type="match status" value="1"/>
</dbReference>
<dbReference type="SUPFAM" id="SSF52972">
    <property type="entry name" value="ITPase-like"/>
    <property type="match status" value="1"/>
</dbReference>
<organism>
    <name type="scientific">Escherichia coli (strain ATCC 8739 / DSM 1576 / NBRC 3972 / NCIMB 8545 / WDCM 00012 / Crooks)</name>
    <dbReference type="NCBI Taxonomy" id="481805"/>
    <lineage>
        <taxon>Bacteria</taxon>
        <taxon>Pseudomonadati</taxon>
        <taxon>Pseudomonadota</taxon>
        <taxon>Gammaproteobacteria</taxon>
        <taxon>Enterobacterales</taxon>
        <taxon>Enterobacteriaceae</taxon>
        <taxon>Escherichia</taxon>
    </lineage>
</organism>
<gene>
    <name type="primary">yjjX</name>
    <name type="ordered locus">EcolC_3662</name>
</gene>
<sequence>MHQVVCATTNPAKIQAILQAFHEIFGEGSCHIASVAVESGVPEQPFGSEETRAGARNRVANARRLLPEADFWVAIEAGIDGDSTFSWVVIENASQRGEARSATLPLPAVILEKVREGEALGPVMSRYTGIDEIGRKEGAIGVFTAGKLTRASVYHQAVILALSPFHNAVYQAL</sequence>
<comment type="function">
    <text evidence="1">Phosphatase that hydrolyzes non-canonical purine nucleotides such as XTP and ITP to their respective diphosphate derivatives. Probably excludes non-canonical purines from DNA/RNA precursor pool, thus preventing their incorporation into DNA/RNA and avoiding chromosomal lesions.</text>
</comment>
<comment type="catalytic activity">
    <reaction evidence="1">
        <text>XTP + H2O = XDP + phosphate + H(+)</text>
        <dbReference type="Rhea" id="RHEA:28406"/>
        <dbReference type="ChEBI" id="CHEBI:15377"/>
        <dbReference type="ChEBI" id="CHEBI:15378"/>
        <dbReference type="ChEBI" id="CHEBI:43474"/>
        <dbReference type="ChEBI" id="CHEBI:59884"/>
        <dbReference type="ChEBI" id="CHEBI:61314"/>
        <dbReference type="EC" id="3.6.1.73"/>
    </reaction>
</comment>
<comment type="catalytic activity">
    <reaction evidence="1">
        <text>ITP + H2O = IDP + phosphate + H(+)</text>
        <dbReference type="Rhea" id="RHEA:28330"/>
        <dbReference type="ChEBI" id="CHEBI:15377"/>
        <dbReference type="ChEBI" id="CHEBI:15378"/>
        <dbReference type="ChEBI" id="CHEBI:43474"/>
        <dbReference type="ChEBI" id="CHEBI:58280"/>
        <dbReference type="ChEBI" id="CHEBI:61402"/>
        <dbReference type="EC" id="3.6.1.73"/>
    </reaction>
</comment>
<comment type="cofactor">
    <cofactor evidence="1">
        <name>Mg(2+)</name>
        <dbReference type="ChEBI" id="CHEBI:18420"/>
    </cofactor>
    <cofactor evidence="1">
        <name>Mn(2+)</name>
        <dbReference type="ChEBI" id="CHEBI:29035"/>
    </cofactor>
    <text evidence="1">Binds 1 divalent metal cation per subunit; can use either Mg(2+) or Mn(2+).</text>
</comment>
<comment type="subunit">
    <text evidence="1">Homodimer.</text>
</comment>
<comment type="similarity">
    <text evidence="1">Belongs to the YjjX NTPase family.</text>
</comment>